<reference key="1">
    <citation type="journal article" date="2005" name="Genome Res.">
        <title>Comparative and functional genomic analyses of the pathogenicity of phytopathogen Xanthomonas campestris pv. campestris.</title>
        <authorList>
            <person name="Qian W."/>
            <person name="Jia Y."/>
            <person name="Ren S.-X."/>
            <person name="He Y.-Q."/>
            <person name="Feng J.-X."/>
            <person name="Lu L.-F."/>
            <person name="Sun Q."/>
            <person name="Ying G."/>
            <person name="Tang D.-J."/>
            <person name="Tang H."/>
            <person name="Wu W."/>
            <person name="Hao P."/>
            <person name="Wang L."/>
            <person name="Jiang B.-L."/>
            <person name="Zeng S."/>
            <person name="Gu W.-Y."/>
            <person name="Lu G."/>
            <person name="Rong L."/>
            <person name="Tian Y."/>
            <person name="Yao Z."/>
            <person name="Fu G."/>
            <person name="Chen B."/>
            <person name="Fang R."/>
            <person name="Qiang B."/>
            <person name="Chen Z."/>
            <person name="Zhao G.-P."/>
            <person name="Tang J.-L."/>
            <person name="He C."/>
        </authorList>
    </citation>
    <scope>NUCLEOTIDE SEQUENCE [LARGE SCALE GENOMIC DNA]</scope>
    <source>
        <strain>8004</strain>
    </source>
</reference>
<evidence type="ECO:0000255" key="1">
    <source>
        <dbReference type="HAMAP-Rule" id="MF_01445"/>
    </source>
</evidence>
<name>TSAD_XANC8</name>
<comment type="function">
    <text evidence="1">Required for the formation of a threonylcarbamoyl group on adenosine at position 37 (t(6)A37) in tRNAs that read codons beginning with adenine. Is involved in the transfer of the threonylcarbamoyl moiety of threonylcarbamoyl-AMP (TC-AMP) to the N6 group of A37, together with TsaE and TsaB. TsaD likely plays a direct catalytic role in this reaction.</text>
</comment>
<comment type="catalytic activity">
    <reaction evidence="1">
        <text>L-threonylcarbamoyladenylate + adenosine(37) in tRNA = N(6)-L-threonylcarbamoyladenosine(37) in tRNA + AMP + H(+)</text>
        <dbReference type="Rhea" id="RHEA:37059"/>
        <dbReference type="Rhea" id="RHEA-COMP:10162"/>
        <dbReference type="Rhea" id="RHEA-COMP:10163"/>
        <dbReference type="ChEBI" id="CHEBI:15378"/>
        <dbReference type="ChEBI" id="CHEBI:73682"/>
        <dbReference type="ChEBI" id="CHEBI:74411"/>
        <dbReference type="ChEBI" id="CHEBI:74418"/>
        <dbReference type="ChEBI" id="CHEBI:456215"/>
        <dbReference type="EC" id="2.3.1.234"/>
    </reaction>
</comment>
<comment type="cofactor">
    <cofactor evidence="1">
        <name>Fe(2+)</name>
        <dbReference type="ChEBI" id="CHEBI:29033"/>
    </cofactor>
    <text evidence="1">Binds 1 Fe(2+) ion per subunit.</text>
</comment>
<comment type="subcellular location">
    <subcellularLocation>
        <location evidence="1">Cytoplasm</location>
    </subcellularLocation>
</comment>
<comment type="similarity">
    <text evidence="1">Belongs to the KAE1 / TsaD family.</text>
</comment>
<organism>
    <name type="scientific">Xanthomonas campestris pv. campestris (strain 8004)</name>
    <dbReference type="NCBI Taxonomy" id="314565"/>
    <lineage>
        <taxon>Bacteria</taxon>
        <taxon>Pseudomonadati</taxon>
        <taxon>Pseudomonadota</taxon>
        <taxon>Gammaproteobacteria</taxon>
        <taxon>Lysobacterales</taxon>
        <taxon>Lysobacteraceae</taxon>
        <taxon>Xanthomonas</taxon>
    </lineage>
</organism>
<gene>
    <name evidence="1" type="primary">tsaD</name>
    <name type="synonym">gcp</name>
    <name type="ordered locus">XC_3888</name>
</gene>
<feature type="chain" id="PRO_0000303617" description="tRNA N6-adenosine threonylcarbamoyltransferase">
    <location>
        <begin position="1"/>
        <end position="354"/>
    </location>
</feature>
<feature type="binding site" evidence="1">
    <location>
        <position position="115"/>
    </location>
    <ligand>
        <name>Fe cation</name>
        <dbReference type="ChEBI" id="CHEBI:24875"/>
    </ligand>
</feature>
<feature type="binding site" evidence="1">
    <location>
        <position position="119"/>
    </location>
    <ligand>
        <name>Fe cation</name>
        <dbReference type="ChEBI" id="CHEBI:24875"/>
    </ligand>
</feature>
<feature type="binding site" evidence="1">
    <location>
        <begin position="138"/>
        <end position="142"/>
    </location>
    <ligand>
        <name>substrate</name>
    </ligand>
</feature>
<feature type="binding site" evidence="1">
    <location>
        <position position="171"/>
    </location>
    <ligand>
        <name>substrate</name>
    </ligand>
</feature>
<feature type="binding site" evidence="1">
    <location>
        <position position="184"/>
    </location>
    <ligand>
        <name>substrate</name>
    </ligand>
</feature>
<feature type="binding site" evidence="1">
    <location>
        <position position="276"/>
    </location>
    <ligand>
        <name>substrate</name>
    </ligand>
</feature>
<feature type="binding site" evidence="1">
    <location>
        <position position="304"/>
    </location>
    <ligand>
        <name>Fe cation</name>
        <dbReference type="ChEBI" id="CHEBI:24875"/>
    </ligand>
</feature>
<sequence length="354" mass="37128">MKVLGIESSCDETGVAVYDTALSGVPALRAHAVYSQIALHAEYGGVVPELASRDHVRKLLPLIRQTLDEAGLRIDELDGVAYTAGPGLVGALLVGAGVARALAWALEVPAIGVHHMEGHLLAPLMEDDPPQPPFVALLVSGGHTQLVSVKALGAYEVLGETLDDAAGEAFDKTAKMMGLPYPGGPQLAALAETGTPGRYKFARPMTDRPGLDFSFSGLKTQVLLAWRGSDQSDTTRADIARGFEDAVVETLAIKCLRALDTADCNTLVVAGGVGANKRLRARLQEAAQRRGGRVCFPRPALCTDNGAMIAFAGALRLEAGEHADAAVQVTPRWDMASLPPLAAARESGIGNRES</sequence>
<dbReference type="EC" id="2.3.1.234" evidence="1"/>
<dbReference type="EMBL" id="CP000050">
    <property type="protein sequence ID" value="AAY50928.1"/>
    <property type="molecule type" value="Genomic_DNA"/>
</dbReference>
<dbReference type="RefSeq" id="WP_011038897.1">
    <property type="nucleotide sequence ID" value="NZ_CP155948.1"/>
</dbReference>
<dbReference type="SMR" id="Q4UPU5"/>
<dbReference type="KEGG" id="xcb:XC_3888"/>
<dbReference type="HOGENOM" id="CLU_023208_0_0_6"/>
<dbReference type="Proteomes" id="UP000000420">
    <property type="component" value="Chromosome"/>
</dbReference>
<dbReference type="GO" id="GO:0005737">
    <property type="term" value="C:cytoplasm"/>
    <property type="evidence" value="ECO:0007669"/>
    <property type="project" value="UniProtKB-SubCell"/>
</dbReference>
<dbReference type="GO" id="GO:0005506">
    <property type="term" value="F:iron ion binding"/>
    <property type="evidence" value="ECO:0007669"/>
    <property type="project" value="UniProtKB-UniRule"/>
</dbReference>
<dbReference type="GO" id="GO:0061711">
    <property type="term" value="F:N(6)-L-threonylcarbamoyladenine synthase activity"/>
    <property type="evidence" value="ECO:0007669"/>
    <property type="project" value="UniProtKB-EC"/>
</dbReference>
<dbReference type="GO" id="GO:0002949">
    <property type="term" value="P:tRNA threonylcarbamoyladenosine modification"/>
    <property type="evidence" value="ECO:0007669"/>
    <property type="project" value="UniProtKB-UniRule"/>
</dbReference>
<dbReference type="CDD" id="cd24133">
    <property type="entry name" value="ASKHA_NBD_TsaD_bac"/>
    <property type="match status" value="1"/>
</dbReference>
<dbReference type="FunFam" id="3.30.420.40:FF:000012">
    <property type="entry name" value="tRNA N6-adenosine threonylcarbamoyltransferase"/>
    <property type="match status" value="1"/>
</dbReference>
<dbReference type="FunFam" id="3.30.420.40:FF:000031">
    <property type="entry name" value="tRNA N6-adenosine threonylcarbamoyltransferase"/>
    <property type="match status" value="1"/>
</dbReference>
<dbReference type="Gene3D" id="3.30.420.40">
    <property type="match status" value="2"/>
</dbReference>
<dbReference type="HAMAP" id="MF_01445">
    <property type="entry name" value="TsaD"/>
    <property type="match status" value="1"/>
</dbReference>
<dbReference type="InterPro" id="IPR043129">
    <property type="entry name" value="ATPase_NBD"/>
</dbReference>
<dbReference type="InterPro" id="IPR000905">
    <property type="entry name" value="Gcp-like_dom"/>
</dbReference>
<dbReference type="InterPro" id="IPR017861">
    <property type="entry name" value="KAE1/TsaD"/>
</dbReference>
<dbReference type="InterPro" id="IPR022450">
    <property type="entry name" value="TsaD"/>
</dbReference>
<dbReference type="NCBIfam" id="TIGR00329">
    <property type="entry name" value="gcp_kae1"/>
    <property type="match status" value="1"/>
</dbReference>
<dbReference type="NCBIfam" id="TIGR03723">
    <property type="entry name" value="T6A_TsaD_YgjD"/>
    <property type="match status" value="1"/>
</dbReference>
<dbReference type="PANTHER" id="PTHR11735">
    <property type="entry name" value="TRNA N6-ADENOSINE THREONYLCARBAMOYLTRANSFERASE"/>
    <property type="match status" value="1"/>
</dbReference>
<dbReference type="PANTHER" id="PTHR11735:SF6">
    <property type="entry name" value="TRNA N6-ADENOSINE THREONYLCARBAMOYLTRANSFERASE, MITOCHONDRIAL"/>
    <property type="match status" value="1"/>
</dbReference>
<dbReference type="Pfam" id="PF00814">
    <property type="entry name" value="TsaD"/>
    <property type="match status" value="1"/>
</dbReference>
<dbReference type="PRINTS" id="PR00789">
    <property type="entry name" value="OSIALOPTASE"/>
</dbReference>
<dbReference type="SUPFAM" id="SSF53067">
    <property type="entry name" value="Actin-like ATPase domain"/>
    <property type="match status" value="2"/>
</dbReference>
<proteinExistence type="inferred from homology"/>
<keyword id="KW-0012">Acyltransferase</keyword>
<keyword id="KW-0963">Cytoplasm</keyword>
<keyword id="KW-0408">Iron</keyword>
<keyword id="KW-0479">Metal-binding</keyword>
<keyword id="KW-0808">Transferase</keyword>
<keyword id="KW-0819">tRNA processing</keyword>
<accession>Q4UPU5</accession>
<protein>
    <recommendedName>
        <fullName evidence="1">tRNA N6-adenosine threonylcarbamoyltransferase</fullName>
        <ecNumber evidence="1">2.3.1.234</ecNumber>
    </recommendedName>
    <alternativeName>
        <fullName evidence="1">N6-L-threonylcarbamoyladenine synthase</fullName>
        <shortName evidence="1">t(6)A synthase</shortName>
    </alternativeName>
    <alternativeName>
        <fullName evidence="1">t(6)A37 threonylcarbamoyladenosine biosynthesis protein TsaD</fullName>
    </alternativeName>
    <alternativeName>
        <fullName evidence="1">tRNA threonylcarbamoyladenosine biosynthesis protein TsaD</fullName>
    </alternativeName>
</protein>